<proteinExistence type="evidence at protein level"/>
<evidence type="ECO:0000250" key="1">
    <source>
        <dbReference type="UniProtKB" id="P97484"/>
    </source>
</evidence>
<evidence type="ECO:0000255" key="2"/>
<evidence type="ECO:0000255" key="3">
    <source>
        <dbReference type="PROSITE-ProRule" id="PRU00114"/>
    </source>
</evidence>
<evidence type="ECO:0000256" key="4">
    <source>
        <dbReference type="SAM" id="MobiDB-lite"/>
    </source>
</evidence>
<evidence type="ECO:0000269" key="5">
    <source>
    </source>
</evidence>
<evidence type="ECO:0000269" key="6">
    <source>
    </source>
</evidence>
<evidence type="ECO:0000269" key="7">
    <source>
    </source>
</evidence>
<evidence type="ECO:0000269" key="8">
    <source ref="3"/>
</evidence>
<evidence type="ECO:0000305" key="9"/>
<keyword id="KW-1064">Adaptive immunity</keyword>
<keyword id="KW-0025">Alternative splicing</keyword>
<keyword id="KW-1003">Cell membrane</keyword>
<keyword id="KW-1015">Disulfide bond</keyword>
<keyword id="KW-0325">Glycoprotein</keyword>
<keyword id="KW-0391">Immunity</keyword>
<keyword id="KW-0393">Immunoglobulin domain</keyword>
<keyword id="KW-0472">Membrane</keyword>
<keyword id="KW-0597">Phosphoprotein</keyword>
<keyword id="KW-1267">Proteomics identification</keyword>
<keyword id="KW-0675">Receptor</keyword>
<keyword id="KW-1185">Reference proteome</keyword>
<keyword id="KW-0677">Repeat</keyword>
<keyword id="KW-0732">Signal</keyword>
<keyword id="KW-0812">Transmembrane</keyword>
<keyword id="KW-1133">Transmembrane helix</keyword>
<sequence>MTPALTALLCLGLSLGPRTRVQAGPFPKPTLWAEPGSVISWGSPVTIWCQGSQEAQEYRLHKEGSPEPLDRNNPLEPKNKARFSIPSMTEHHAGRYRCHYYSSAGWSEPSDPLEMVMTGAYSKPTLSALPSPVVASGGNMTLRCGSQKGYHHFVLMKEGEHQLPRTLDSQQLHSRGFQALFPVGPVTPSHRWRFTCYYYYTNTPWVWSHPSDPLEILPSGVSRKPSLLTLQGPVLAPGQSLTLQCGSDVGYNRFVLYKEGERDFLQRPGQQPQAGLSQANFTLGPVSPSNGGQYRCYGAHNLSSEWSAPSDPLNILMAGQIYDTVSLSAQPGPTVASGENVTLLCQSWWQFDTFLLTKEGAAHPPLRLRSMYGAHKYQAEFPMSPVTSAHAGTYRCYGSYSSNPHLLSHPSEPLELVVSGHSGGSSLPPTGPPSTPGLGRYLEVLIGVSVAFVLLLFLLLFLLLRRQRHSKHRTSDQRKTDFQRPAGAAETEPKDRGLLRRSSPAADVQEENLYAAVKDTQSEDRVELDSQSPHDEDPQAVTYAPVKHSSPRREMASPPSSLSGEFLDTKDRQVEEDRQMDTEAAASEASQDVTYAQLHSLTLRRKATEPPPSQEGEPPAEPSIYATLAIH</sequence>
<gene>
    <name type="primary">LILRB3</name>
    <name type="synonym">ILT5</name>
    <name type="synonym">LIR3</name>
</gene>
<accession>O75022</accession>
<accession>C9J1P3</accession>
<accession>C9JIP1</accession>
<accession>O15471</accession>
<accession>Q86U49</accession>
<dbReference type="EMBL" id="U91928">
    <property type="protein sequence ID" value="AAB68668.1"/>
    <property type="molecule type" value="mRNA"/>
</dbReference>
<dbReference type="EMBL" id="AF025533">
    <property type="protein sequence ID" value="AAB87667.1"/>
    <property type="molecule type" value="mRNA"/>
</dbReference>
<dbReference type="EMBL" id="AF256195">
    <property type="protein sequence ID" value="AAP30716.1"/>
    <property type="molecule type" value="Genomic_DNA"/>
</dbReference>
<dbReference type="EMBL" id="AC010492">
    <property type="status" value="NOT_ANNOTATED_CDS"/>
    <property type="molecule type" value="Genomic_DNA"/>
</dbReference>
<dbReference type="EMBL" id="AC012314">
    <property type="status" value="NOT_ANNOTATED_CDS"/>
    <property type="molecule type" value="Genomic_DNA"/>
</dbReference>
<dbReference type="CCDS" id="CCDS33105.1">
    <molecule id="O75022-1"/>
</dbReference>
<dbReference type="CCDS" id="CCDS46175.1">
    <molecule id="O75022-3"/>
</dbReference>
<dbReference type="RefSeq" id="XP_016885785.1">
    <molecule id="O75022-3"/>
    <property type="nucleotide sequence ID" value="XM_017030296.1"/>
</dbReference>
<dbReference type="RefSeq" id="XP_016885786.1">
    <molecule id="O75022-1"/>
    <property type="nucleotide sequence ID" value="XM_017030297.1"/>
</dbReference>
<dbReference type="SMR" id="O75022"/>
<dbReference type="FunCoup" id="O75022">
    <property type="interactions" value="238"/>
</dbReference>
<dbReference type="IntAct" id="O75022">
    <property type="interactions" value="14"/>
</dbReference>
<dbReference type="STRING" id="9606.ENSP00000245620"/>
<dbReference type="GlyCosmos" id="O75022">
    <property type="glycosylation" value="5 sites, 1 glycan"/>
</dbReference>
<dbReference type="GlyGen" id="O75022">
    <property type="glycosylation" value="8 sites, 1 O-linked glycan (1 site)"/>
</dbReference>
<dbReference type="iPTMnet" id="O75022"/>
<dbReference type="PhosphoSitePlus" id="O75022"/>
<dbReference type="BioMuta" id="LILRB3"/>
<dbReference type="jPOST" id="O75022"/>
<dbReference type="MassIVE" id="O75022"/>
<dbReference type="PaxDb" id="9606-ENSP00000245620"/>
<dbReference type="PeptideAtlas" id="O75022"/>
<dbReference type="Antibodypedia" id="34955">
    <property type="antibodies" value="405 antibodies from 27 providers"/>
</dbReference>
<dbReference type="Ensembl" id="ENST00000245620.13">
    <property type="protein sequence ID" value="ENSP00000245620.9"/>
    <property type="gene ID" value="ENSG00000204577.12"/>
</dbReference>
<dbReference type="Ensembl" id="ENST00000391750.5">
    <property type="protein sequence ID" value="ENSP00000375630.1"/>
    <property type="gene ID" value="ENSG00000204577.12"/>
</dbReference>
<dbReference type="Ensembl" id="ENST00000611086.4">
    <molecule id="O75022-1"/>
    <property type="protein sequence ID" value="ENSP00000483625.1"/>
    <property type="gene ID" value="ENSG00000274587.5"/>
</dbReference>
<dbReference type="Ensembl" id="ENST00000613698.4">
    <property type="protein sequence ID" value="ENSP00000479234.1"/>
    <property type="gene ID" value="ENSG00000275019.5"/>
</dbReference>
<dbReference type="KEGG" id="hsa:102725035"/>
<dbReference type="KEGG" id="hsa:107987462"/>
<dbReference type="UCSC" id="uc032icw.2">
    <molecule id="O75022-1"/>
    <property type="organism name" value="human"/>
</dbReference>
<dbReference type="AGR" id="HGNC:6607"/>
<dbReference type="DisGeNET" id="102725035"/>
<dbReference type="DisGeNET" id="107987462"/>
<dbReference type="DisGeNET" id="11025"/>
<dbReference type="GeneCards" id="LILRB3"/>
<dbReference type="HGNC" id="HGNC:6607">
    <property type="gene designation" value="LILRB3"/>
</dbReference>
<dbReference type="HPA" id="ENSG00000204577">
    <property type="expression patterns" value="Tissue enhanced (lung, lymphoid tissue)"/>
</dbReference>
<dbReference type="MIM" id="604820">
    <property type="type" value="gene"/>
</dbReference>
<dbReference type="neXtProt" id="NX_O75022"/>
<dbReference type="PharmGKB" id="PA30381"/>
<dbReference type="VEuPathDB" id="HostDB:ENSG00000204577"/>
<dbReference type="eggNOG" id="ENOG502RYEX">
    <property type="taxonomic scope" value="Eukaryota"/>
</dbReference>
<dbReference type="HOGENOM" id="CLU_021100_2_3_1"/>
<dbReference type="InParanoid" id="O75022"/>
<dbReference type="OrthoDB" id="9427497at2759"/>
<dbReference type="PAN-GO" id="O75022">
    <property type="GO annotations" value="3 GO annotations based on evolutionary models"/>
</dbReference>
<dbReference type="PhylomeDB" id="O75022"/>
<dbReference type="TreeFam" id="TF336644"/>
<dbReference type="PathwayCommons" id="O75022"/>
<dbReference type="Reactome" id="R-HSA-198933">
    <property type="pathway name" value="Immunoregulatory interactions between a Lymphoid and a non-Lymphoid cell"/>
</dbReference>
<dbReference type="Reactome" id="R-HSA-6798695">
    <property type="pathway name" value="Neutrophil degranulation"/>
</dbReference>
<dbReference type="SignaLink" id="O75022"/>
<dbReference type="BioGRID-ORCS" id="102725035">
    <property type="hits" value="0 hits in 3 CRISPR screens"/>
</dbReference>
<dbReference type="BioGRID-ORCS" id="107987462">
    <property type="hits" value="0 hits in 4 CRISPR screens"/>
</dbReference>
<dbReference type="ChiTaRS" id="LILRB3">
    <property type="organism name" value="human"/>
</dbReference>
<dbReference type="Pharos" id="O75022">
    <property type="development level" value="Tbio"/>
</dbReference>
<dbReference type="PRO" id="PR:O75022"/>
<dbReference type="Proteomes" id="UP000005640">
    <property type="component" value="Chromosome 19"/>
</dbReference>
<dbReference type="RNAct" id="O75022">
    <property type="molecule type" value="protein"/>
</dbReference>
<dbReference type="Bgee" id="ENSG00000204577">
    <property type="expression patterns" value="Expressed in blood and 97 other cell types or tissues"/>
</dbReference>
<dbReference type="ExpressionAtlas" id="O75022">
    <property type="expression patterns" value="baseline and differential"/>
</dbReference>
<dbReference type="GO" id="GO:0005886">
    <property type="term" value="C:plasma membrane"/>
    <property type="evidence" value="ECO:0000318"/>
    <property type="project" value="GO_Central"/>
</dbReference>
<dbReference type="GO" id="GO:0030667">
    <property type="term" value="C:secretory granule membrane"/>
    <property type="evidence" value="ECO:0000304"/>
    <property type="project" value="Reactome"/>
</dbReference>
<dbReference type="GO" id="GO:0032396">
    <property type="term" value="F:inhibitory MHC class I receptor activity"/>
    <property type="evidence" value="ECO:0000318"/>
    <property type="project" value="GO_Central"/>
</dbReference>
<dbReference type="GO" id="GO:0038023">
    <property type="term" value="F:signaling receptor activity"/>
    <property type="evidence" value="ECO:0000304"/>
    <property type="project" value="ProtInc"/>
</dbReference>
<dbReference type="GO" id="GO:0004888">
    <property type="term" value="F:transmembrane signaling receptor activity"/>
    <property type="evidence" value="ECO:0000304"/>
    <property type="project" value="ProtInc"/>
</dbReference>
<dbReference type="GO" id="GO:0002250">
    <property type="term" value="P:adaptive immune response"/>
    <property type="evidence" value="ECO:0007669"/>
    <property type="project" value="UniProtKB-KW"/>
</dbReference>
<dbReference type="GO" id="GO:0007166">
    <property type="term" value="P:cell surface receptor signaling pathway"/>
    <property type="evidence" value="ECO:0000304"/>
    <property type="project" value="ProtInc"/>
</dbReference>
<dbReference type="GO" id="GO:0019221">
    <property type="term" value="P:cytokine-mediated signaling pathway"/>
    <property type="evidence" value="ECO:0000318"/>
    <property type="project" value="GO_Central"/>
</dbReference>
<dbReference type="GO" id="GO:0006952">
    <property type="term" value="P:defense response"/>
    <property type="evidence" value="ECO:0000304"/>
    <property type="project" value="ProtInc"/>
</dbReference>
<dbReference type="GO" id="GO:0002764">
    <property type="term" value="P:immune response-regulating signaling pathway"/>
    <property type="evidence" value="ECO:0000318"/>
    <property type="project" value="GO_Central"/>
</dbReference>
<dbReference type="GO" id="GO:0045671">
    <property type="term" value="P:negative regulation of osteoclast differentiation"/>
    <property type="evidence" value="ECO:0000314"/>
    <property type="project" value="UniProtKB"/>
</dbReference>
<dbReference type="CDD" id="cd05751">
    <property type="entry name" value="IgC2_D1_LILR_KIR_like"/>
    <property type="match status" value="1"/>
</dbReference>
<dbReference type="FunFam" id="2.60.40.10:FF:000049">
    <property type="entry name" value="Leukocyte immunoglobulin-like receptor subfamily B member 1"/>
    <property type="match status" value="4"/>
</dbReference>
<dbReference type="Gene3D" id="2.60.40.10">
    <property type="entry name" value="Immunoglobulins"/>
    <property type="match status" value="4"/>
</dbReference>
<dbReference type="InterPro" id="IPR007110">
    <property type="entry name" value="Ig-like_dom"/>
</dbReference>
<dbReference type="InterPro" id="IPR036179">
    <property type="entry name" value="Ig-like_dom_sf"/>
</dbReference>
<dbReference type="InterPro" id="IPR013783">
    <property type="entry name" value="Ig-like_fold"/>
</dbReference>
<dbReference type="InterPro" id="IPR050412">
    <property type="entry name" value="Ig-like_Receptors_ImmuneReg"/>
</dbReference>
<dbReference type="InterPro" id="IPR003599">
    <property type="entry name" value="Ig_sub"/>
</dbReference>
<dbReference type="InterPro" id="IPR003598">
    <property type="entry name" value="Ig_sub2"/>
</dbReference>
<dbReference type="InterPro" id="IPR013151">
    <property type="entry name" value="Immunoglobulin_dom"/>
</dbReference>
<dbReference type="PANTHER" id="PTHR11738:SF187">
    <property type="entry name" value="LEUKOCYTE IMMUNOGLOBULIN-LIKE RECEPTOR SUBFAMILY A MEMBER 6-RELATED"/>
    <property type="match status" value="1"/>
</dbReference>
<dbReference type="PANTHER" id="PTHR11738">
    <property type="entry name" value="MHC CLASS I NK CELL RECEPTOR"/>
    <property type="match status" value="1"/>
</dbReference>
<dbReference type="Pfam" id="PF00047">
    <property type="entry name" value="ig"/>
    <property type="match status" value="2"/>
</dbReference>
<dbReference type="Pfam" id="PF13895">
    <property type="entry name" value="Ig_2"/>
    <property type="match status" value="1"/>
</dbReference>
<dbReference type="SMART" id="SM00409">
    <property type="entry name" value="IG"/>
    <property type="match status" value="3"/>
</dbReference>
<dbReference type="SMART" id="SM00408">
    <property type="entry name" value="IGc2"/>
    <property type="match status" value="3"/>
</dbReference>
<dbReference type="SUPFAM" id="SSF48726">
    <property type="entry name" value="Immunoglobulin"/>
    <property type="match status" value="4"/>
</dbReference>
<dbReference type="PROSITE" id="PS50835">
    <property type="entry name" value="IG_LIKE"/>
    <property type="match status" value="1"/>
</dbReference>
<reference key="1">
    <citation type="journal article" date="1997" name="J. Immunol.">
        <title>Molecular identification of a novel family of human Ig superfamily members that possess immunoreceptor tyrosine-based inhibition motifs and homology to the mouse gp49B1 inhibitory receptor.</title>
        <authorList>
            <person name="Arm J.P."/>
            <person name="Nwankwo C."/>
            <person name="Austen K.F."/>
        </authorList>
    </citation>
    <scope>NUCLEOTIDE SEQUENCE [MRNA] (ISOFORM 1)</scope>
    <scope>VARIANTS ASN-122 AND GLN-205</scope>
    <source>
        <tissue>Monocyte</tissue>
    </source>
</reference>
<reference key="2">
    <citation type="journal article" date="1997" name="J. Immunol.">
        <title>A family of human lymphoid and myeloid Ig-like receptors, some of which bind to MHC class I molecules.</title>
        <authorList>
            <person name="Borges L."/>
            <person name="Hsu M.-L."/>
            <person name="Fanger N."/>
            <person name="Kubin M."/>
            <person name="Cosman D."/>
        </authorList>
    </citation>
    <scope>NUCLEOTIDE SEQUENCE [MRNA] (ISOFORM 1)</scope>
    <scope>VARIANTS GLN-59; GLN-90; ARG-400; TYR-405; HIS-539 AND ALA-574</scope>
    <scope>TISSUE SPECIFICITY</scope>
    <source>
        <tissue>Peripheral blood leukocyte</tissue>
    </source>
</reference>
<reference key="3">
    <citation type="submission" date="2000-04" db="EMBL/GenBank/DDBJ databases">
        <title>Genomics and diversity of the immunoglobulin-like transcript 5 locus.</title>
        <authorList>
            <person name="Cuillerier B."/>
            <person name="Bahram S."/>
        </authorList>
    </citation>
    <scope>NUCLEOTIDE SEQUENCE [GENOMIC DNA]</scope>
    <scope>ALTERNATIVE SPLICING (ISOFORM 2)</scope>
    <scope>VARIANT ARG-400</scope>
</reference>
<reference key="4">
    <citation type="journal article" date="2004" name="Nature">
        <title>The DNA sequence and biology of human chromosome 19.</title>
        <authorList>
            <person name="Grimwood J."/>
            <person name="Gordon L.A."/>
            <person name="Olsen A.S."/>
            <person name="Terry A."/>
            <person name="Schmutz J."/>
            <person name="Lamerdin J.E."/>
            <person name="Hellsten U."/>
            <person name="Goodstein D."/>
            <person name="Couronne O."/>
            <person name="Tran-Gyamfi M."/>
            <person name="Aerts A."/>
            <person name="Altherr M."/>
            <person name="Ashworth L."/>
            <person name="Bajorek E."/>
            <person name="Black S."/>
            <person name="Branscomb E."/>
            <person name="Caenepeel S."/>
            <person name="Carrano A.V."/>
            <person name="Caoile C."/>
            <person name="Chan Y.M."/>
            <person name="Christensen M."/>
            <person name="Cleland C.A."/>
            <person name="Copeland A."/>
            <person name="Dalin E."/>
            <person name="Dehal P."/>
            <person name="Denys M."/>
            <person name="Detter J.C."/>
            <person name="Escobar J."/>
            <person name="Flowers D."/>
            <person name="Fotopulos D."/>
            <person name="Garcia C."/>
            <person name="Georgescu A.M."/>
            <person name="Glavina T."/>
            <person name="Gomez M."/>
            <person name="Gonzales E."/>
            <person name="Groza M."/>
            <person name="Hammon N."/>
            <person name="Hawkins T."/>
            <person name="Haydu L."/>
            <person name="Ho I."/>
            <person name="Huang W."/>
            <person name="Israni S."/>
            <person name="Jett J."/>
            <person name="Kadner K."/>
            <person name="Kimball H."/>
            <person name="Kobayashi A."/>
            <person name="Larionov V."/>
            <person name="Leem S.-H."/>
            <person name="Lopez F."/>
            <person name="Lou Y."/>
            <person name="Lowry S."/>
            <person name="Malfatti S."/>
            <person name="Martinez D."/>
            <person name="McCready P.M."/>
            <person name="Medina C."/>
            <person name="Morgan J."/>
            <person name="Nelson K."/>
            <person name="Nolan M."/>
            <person name="Ovcharenko I."/>
            <person name="Pitluck S."/>
            <person name="Pollard M."/>
            <person name="Popkie A.P."/>
            <person name="Predki P."/>
            <person name="Quan G."/>
            <person name="Ramirez L."/>
            <person name="Rash S."/>
            <person name="Retterer J."/>
            <person name="Rodriguez A."/>
            <person name="Rogers S."/>
            <person name="Salamov A."/>
            <person name="Salazar A."/>
            <person name="She X."/>
            <person name="Smith D."/>
            <person name="Slezak T."/>
            <person name="Solovyev V."/>
            <person name="Thayer N."/>
            <person name="Tice H."/>
            <person name="Tsai M."/>
            <person name="Ustaszewska A."/>
            <person name="Vo N."/>
            <person name="Wagner M."/>
            <person name="Wheeler J."/>
            <person name="Wu K."/>
            <person name="Xie G."/>
            <person name="Yang J."/>
            <person name="Dubchak I."/>
            <person name="Furey T.S."/>
            <person name="DeJong P."/>
            <person name="Dickson M."/>
            <person name="Gordon D."/>
            <person name="Eichler E.E."/>
            <person name="Pennacchio L.A."/>
            <person name="Richardson P."/>
            <person name="Stubbs L."/>
            <person name="Rokhsar D.S."/>
            <person name="Myers R.M."/>
            <person name="Rubin E.M."/>
            <person name="Lucas S.M."/>
        </authorList>
    </citation>
    <scope>NUCLEOTIDE SEQUENCE [LARGE SCALE GENOMIC DNA]</scope>
</reference>
<reference key="5">
    <citation type="journal article" date="2000" name="Immunogenetics">
        <title>Extensive gene duplications and a large inversion characterize the human leukocyte receptor cluster.</title>
        <authorList>
            <person name="Wende H."/>
            <person name="Volz A."/>
            <person name="Ziegler A."/>
        </authorList>
    </citation>
    <scope>IDENTIFICATION IN THE LRC</scope>
</reference>
<reference key="6">
    <citation type="journal article" date="2001" name="Immunogenetics">
        <authorList>
            <person name="Wende H."/>
            <person name="Volz A."/>
            <person name="Ziegler A."/>
        </authorList>
    </citation>
    <scope>ERRATUM OF PUBMED:10941842</scope>
</reference>
<reference key="7">
    <citation type="journal article" date="2017" name="Hum. Mol. Genet.">
        <title>A homozygous mutation in TRIM36 causes autosomal recessive anencephaly in an Indian family.</title>
        <authorList>
            <person name="Singh N."/>
            <person name="Kumble Bhat V."/>
            <person name="Tiwari A."/>
            <person name="Kodaganur S.G."/>
            <person name="Tontanahal S.J."/>
            <person name="Sarda A."/>
            <person name="Malini K.V."/>
            <person name="Kumar A."/>
        </authorList>
    </citation>
    <scope>VARIANT HIS-171</scope>
</reference>
<comment type="function">
    <text evidence="1">May act as receptor for class I MHC antigens. Becomes activated upon coligation of LILRB3 and immune receptors, such as FCGR2B and the B-cell receptor. Down-regulates antigen-induced B-cell activation by recruiting phosphatases to its immunoreceptor tyrosine-based inhibitor motifs (ITIM).</text>
</comment>
<comment type="subunit">
    <text evidence="1">Interacts with LYN, PTPN6/SHP-1 and PTPN11/SHP-2.</text>
</comment>
<comment type="interaction">
    <interactant intactId="EBI-2830524">
        <id>O75022</id>
    </interactant>
    <interactant intactId="EBI-297888">
        <id>P05783</id>
        <label>KRT18</label>
    </interactant>
    <organismsDiffer>false</organismsDiffer>
    <experiments>3</experiments>
</comment>
<comment type="interaction">
    <interactant intactId="EBI-2830524">
        <id>O75022</id>
    </interactant>
    <interactant intactId="EBI-297852">
        <id>P05787</id>
        <label>KRT8</label>
    </interactant>
    <organismsDiffer>false</organismsDiffer>
    <experiments>3</experiments>
</comment>
<comment type="interaction">
    <interactant intactId="EBI-2830524">
        <id>O75022</id>
    </interactant>
    <interactant intactId="EBI-78260">
        <id>P29350</id>
        <label>PTPN6</label>
    </interactant>
    <organismsDiffer>false</organismsDiffer>
    <experiments>4</experiments>
</comment>
<comment type="subcellular location">
    <subcellularLocation>
        <location>Cell membrane</location>
        <topology>Single-pass type I membrane protein</topology>
    </subcellularLocation>
</comment>
<comment type="alternative products">
    <event type="alternative splicing"/>
    <isoform>
        <id>O75022-1</id>
        <name>1</name>
        <sequence type="displayed"/>
    </isoform>
    <isoform>
        <id>O75022-2</id>
        <name>2</name>
        <sequence type="described" ref="VSP_008459"/>
    </isoform>
    <isoform>
        <id>O75022-3</id>
        <name>3</name>
        <sequence type="described" ref="VSP_040126"/>
    </isoform>
</comment>
<comment type="tissue specificity">
    <text evidence="7">Detected in monocytes and B-cells.</text>
</comment>
<comment type="domain">
    <text evidence="1">Contains 3 copies of a cytoplasmic motif that is referred to as the immunoreceptor tyrosine-based inhibitor motif (ITIM). This motif is involved in modulation of cellular responses. The phosphorylated ITIM motif can bind the SH2 domain of several SH2-containing phosphatases, including PTPN6/SHP-1, resulting in the dephosphorylation of the downstream protein kinases SYK and BTK.</text>
</comment>
<comment type="PTM">
    <text evidence="1">Phosphorylated on tyrosine residues by LYN. Phosphorylation at Tyr-595 and Tyr-625 is important for interaction with PTPN6/SHP-1 and PTPN11/SHP-2.</text>
</comment>
<comment type="miscellaneous">
    <text>Belongs to the leukocyte receptor cluster (LRC) present on 19q13.4.</text>
</comment>
<feature type="signal peptide" evidence="2">
    <location>
        <begin position="1"/>
        <end position="23"/>
    </location>
</feature>
<feature type="chain" id="PRO_0000014822" description="Leukocyte immunoglobulin-like receptor subfamily B member 3">
    <location>
        <begin position="24"/>
        <end position="631"/>
    </location>
</feature>
<feature type="topological domain" description="Extracellular" evidence="2">
    <location>
        <begin position="24"/>
        <end position="443"/>
    </location>
</feature>
<feature type="transmembrane region" description="Helical" evidence="2">
    <location>
        <begin position="444"/>
        <end position="464"/>
    </location>
</feature>
<feature type="topological domain" description="Cytoplasmic" evidence="2">
    <location>
        <begin position="465"/>
        <end position="631"/>
    </location>
</feature>
<feature type="domain" description="Ig-like C2-type 1">
    <location>
        <begin position="42"/>
        <end position="100"/>
    </location>
</feature>
<feature type="domain" description="Ig-like C2-type 2">
    <location>
        <begin position="111"/>
        <end position="229"/>
    </location>
</feature>
<feature type="domain" description="Ig-like C2-type 3">
    <location>
        <begin position="225"/>
        <end position="314"/>
    </location>
</feature>
<feature type="domain" description="Ig-like C2-type 4">
    <location>
        <begin position="338"/>
        <end position="419"/>
    </location>
</feature>
<feature type="region of interest" description="Disordered" evidence="4">
    <location>
        <begin position="59"/>
        <end position="78"/>
    </location>
</feature>
<feature type="region of interest" description="Disordered" evidence="4">
    <location>
        <begin position="470"/>
        <end position="631"/>
    </location>
</feature>
<feature type="short sequence motif" description="ITIM motif 1">
    <location>
        <begin position="512"/>
        <end position="517"/>
    </location>
</feature>
<feature type="short sequence motif" description="ITIM motif 2">
    <location>
        <begin position="593"/>
        <end position="598"/>
    </location>
</feature>
<feature type="short sequence motif" description="ITIM motif 3">
    <location>
        <begin position="623"/>
        <end position="628"/>
    </location>
</feature>
<feature type="compositionally biased region" description="Basic and acidic residues" evidence="4">
    <location>
        <begin position="59"/>
        <end position="70"/>
    </location>
</feature>
<feature type="compositionally biased region" description="Basic and acidic residues" evidence="4">
    <location>
        <begin position="473"/>
        <end position="482"/>
    </location>
</feature>
<feature type="compositionally biased region" description="Basic and acidic residues" evidence="4">
    <location>
        <begin position="520"/>
        <end position="537"/>
    </location>
</feature>
<feature type="compositionally biased region" description="Basic and acidic residues" evidence="4">
    <location>
        <begin position="567"/>
        <end position="581"/>
    </location>
</feature>
<feature type="compositionally biased region" description="Polar residues" evidence="4">
    <location>
        <begin position="588"/>
        <end position="600"/>
    </location>
</feature>
<feature type="modified residue" description="Phosphotyrosine; by LYN" evidence="1">
    <location>
        <position position="595"/>
    </location>
</feature>
<feature type="modified residue" description="Phosphotyrosine; by LYN" evidence="1">
    <location>
        <position position="625"/>
    </location>
</feature>
<feature type="glycosylation site" description="N-linked (GlcNAc...) asparagine" evidence="2">
    <location>
        <position position="139"/>
    </location>
</feature>
<feature type="glycosylation site" description="N-linked (GlcNAc...) asparagine" evidence="2">
    <location>
        <position position="280"/>
    </location>
</feature>
<feature type="glycosylation site" description="N-linked (GlcNAc...) asparagine" evidence="2">
    <location>
        <position position="301"/>
    </location>
</feature>
<feature type="glycosylation site" description="N-linked (GlcNAc...) asparagine" evidence="2">
    <location>
        <position position="340"/>
    </location>
</feature>
<feature type="disulfide bond" evidence="3">
    <location>
        <begin position="49"/>
        <end position="98"/>
    </location>
</feature>
<feature type="disulfide bond" evidence="3">
    <location>
        <begin position="144"/>
        <end position="196"/>
    </location>
</feature>
<feature type="disulfide bond" evidence="3">
    <location>
        <begin position="245"/>
        <end position="296"/>
    </location>
</feature>
<feature type="disulfide bond" evidence="3">
    <location>
        <begin position="345"/>
        <end position="396"/>
    </location>
</feature>
<feature type="splice variant" id="VSP_008459" description="In isoform 2." evidence="9">
    <original>G</original>
    <variation>GGPEDQPLNPPGSGPQNG</variation>
    <location>
        <position position="437"/>
    </location>
</feature>
<feature type="splice variant" id="VSP_040126" description="In isoform 3." evidence="9">
    <original>S</original>
    <variation>SQ</variation>
    <location>
        <position position="530"/>
    </location>
</feature>
<feature type="sequence variant" id="VAR_017001" description="In dbSNP:rs1132588.">
    <original>V</original>
    <variation>M</variation>
    <location>
        <position position="21"/>
    </location>
</feature>
<feature type="sequence variant" id="VAR_017002" description="In dbSNP:rs200199363." evidence="7">
    <original>R</original>
    <variation>Q</variation>
    <location>
        <position position="59"/>
    </location>
</feature>
<feature type="sequence variant" id="VAR_017003" description="In dbSNP:rs80077296.">
    <original>L</original>
    <variation>W</variation>
    <location>
        <position position="69"/>
    </location>
</feature>
<feature type="sequence variant" id="VAR_017004" description="In dbSNP:rs138323850." evidence="7">
    <original>E</original>
    <variation>Q</variation>
    <location>
        <position position="90"/>
    </location>
</feature>
<feature type="sequence variant" id="VAR_017005" description="In dbSNP:rs200783306." evidence="6">
    <original>S</original>
    <variation>N</variation>
    <location>
        <position position="122"/>
    </location>
</feature>
<feature type="sequence variant" id="VAR_079582" description="In dbSNP:rs557014003." evidence="5">
    <original>Q</original>
    <variation>H</variation>
    <location>
        <position position="171"/>
    </location>
</feature>
<feature type="sequence variant" id="VAR_017006" description="Requires 2 nucleotide substitutions; dbSNP:rs1063805." evidence="6">
    <original>W</original>
    <variation>Q</variation>
    <location>
        <position position="205"/>
    </location>
</feature>
<feature type="sequence variant" id="VAR_017009" description="In dbSNP:rs1052995.">
    <original>Y</original>
    <variation>F</variation>
    <location>
        <position position="400"/>
    </location>
</feature>
<feature type="sequence variant" id="VAR_017008" description="In dbSNP:rs1052992.">
    <original>Y</original>
    <variation>H</variation>
    <location>
        <position position="400"/>
    </location>
</feature>
<feature type="sequence variant" id="VAR_017007" description="Requires 2 nucleotide substitutions; dbSNP:rs771265921." evidence="7 8">
    <original>Y</original>
    <variation>R</variation>
    <location>
        <position position="400"/>
    </location>
</feature>
<feature type="sequence variant" id="VAR_017010" description="In dbSNP:rs201735825." evidence="7">
    <original>H</original>
    <variation>Y</variation>
    <location>
        <position position="405"/>
    </location>
</feature>
<feature type="sequence variant" id="VAR_017012" description="In dbSNP:rs1053002." evidence="7">
    <original>Q</original>
    <variation>H</variation>
    <location>
        <position position="539"/>
    </location>
</feature>
<feature type="sequence variant" id="VAR_017013" description="In dbSNP:rs1053008." evidence="7">
    <original>V</original>
    <variation>A</variation>
    <location>
        <position position="574"/>
    </location>
</feature>
<feature type="sequence conflict" description="In Ref. 1; AAB68668 and 2; AAB87667." evidence="9" ref="1 2">
    <original>Q</original>
    <variation>L</variation>
    <location>
        <position position="53"/>
    </location>
</feature>
<feature type="sequence conflict" description="In Ref. 1; AAB68668 and 2; AAB87667." evidence="9" ref="1 2">
    <original>H</original>
    <variation>D</variation>
    <location>
        <position position="61"/>
    </location>
</feature>
<feature type="sequence conflict" description="In Ref. 1; AAB68668 and 2; AAB87667." evidence="9" ref="1 2">
    <original>M</original>
    <variation>L</variation>
    <location>
        <position position="115"/>
    </location>
</feature>
<feature type="sequence conflict" description="In Ref. 1; AAB68668." evidence="9" ref="1">
    <original>A</original>
    <variation>F</variation>
    <location>
        <position position="120"/>
    </location>
</feature>
<feature type="sequence conflict" description="In Ref. 2; AAB87667." evidence="9" ref="2">
    <original>G</original>
    <variation>R</variation>
    <location>
        <position position="149"/>
    </location>
</feature>
<feature type="sequence conflict" description="In Ref. 1; AAB68668 and 2; AAB87667." evidence="9" ref="1 2">
    <original>R</original>
    <variation>G</variation>
    <location>
        <position position="175"/>
    </location>
</feature>
<feature type="sequence conflict" description="In Ref. 1; AAB68668, 2; AAB87667 and 3; AAP30716." evidence="9" ref="1 2 3">
    <original>T</original>
    <variation>N</variation>
    <location>
        <position position="187"/>
    </location>
</feature>
<feature type="sequence conflict" description="In Ref. 1; AAB68668 and 2; AAB87667." evidence="9" ref="1 2">
    <original>T</original>
    <variation>M</variation>
    <location>
        <position position="201"/>
    </location>
</feature>
<feature type="sequence conflict" description="In Ref. 2; AAB87667." evidence="9" ref="2">
    <original>W</original>
    <variation>R</variation>
    <location>
        <position position="205"/>
    </location>
</feature>
<feature type="sequence conflict" description="In Ref. 1; AAB68668 and 2; AAB87667." evidence="9" ref="1 2">
    <original>N</original>
    <variation>D</variation>
    <location>
        <position position="252"/>
    </location>
</feature>
<feature type="sequence conflict" description="In Ref. 3; AAP30716." evidence="9" ref="3">
    <original>D</original>
    <variation>A</variation>
    <location>
        <position position="263"/>
    </location>
</feature>
<feature type="sequence conflict" description="In Ref. 3; AAP30716." evidence="9" ref="3">
    <original>P</original>
    <variation>S</variation>
    <location>
        <position position="268"/>
    </location>
</feature>
<feature type="sequence conflict" description="In Ref. 1; AAB68668." evidence="9" ref="1">
    <original>N</original>
    <variation>H</variation>
    <location>
        <position position="290"/>
    </location>
</feature>
<feature type="sequence conflict" description="In Ref. 1; AAB68668." evidence="9" ref="1">
    <original>H</original>
    <variation>F</variation>
    <location>
        <position position="409"/>
    </location>
</feature>
<feature type="sequence conflict" description="In Ref. 1; AAB68668." evidence="9" ref="1">
    <original>V</original>
    <variation>M</variation>
    <location>
        <position position="417"/>
    </location>
</feature>
<feature type="sequence conflict" description="In Ref. 2; AAB87667." evidence="9" ref="2">
    <original>R</original>
    <variation>G</variation>
    <location>
        <position position="525"/>
    </location>
</feature>
<feature type="sequence conflict" description="In Ref. 2; AAB87667." evidence="9" ref="2">
    <original>S</original>
    <variation>P</variation>
    <location>
        <position position="561"/>
    </location>
</feature>
<name>LIRB3_HUMAN</name>
<organism>
    <name type="scientific">Homo sapiens</name>
    <name type="common">Human</name>
    <dbReference type="NCBI Taxonomy" id="9606"/>
    <lineage>
        <taxon>Eukaryota</taxon>
        <taxon>Metazoa</taxon>
        <taxon>Chordata</taxon>
        <taxon>Craniata</taxon>
        <taxon>Vertebrata</taxon>
        <taxon>Euteleostomi</taxon>
        <taxon>Mammalia</taxon>
        <taxon>Eutheria</taxon>
        <taxon>Euarchontoglires</taxon>
        <taxon>Primates</taxon>
        <taxon>Haplorrhini</taxon>
        <taxon>Catarrhini</taxon>
        <taxon>Hominidae</taxon>
        <taxon>Homo</taxon>
    </lineage>
</organism>
<protein>
    <recommendedName>
        <fullName>Leukocyte immunoglobulin-like receptor subfamily B member 3</fullName>
        <shortName>LIR-3</shortName>
        <shortName>Leukocyte immunoglobulin-like receptor 3</shortName>
    </recommendedName>
    <alternativeName>
        <fullName>CD85 antigen-like family member A</fullName>
    </alternativeName>
    <alternativeName>
        <fullName>Immunoglobulin-like transcript 5</fullName>
        <shortName>ILT-5</shortName>
    </alternativeName>
    <alternativeName>
        <fullName>Monocyte inhibitory receptor HL9</fullName>
    </alternativeName>
    <cdAntigenName>CD85a</cdAntigenName>
</protein>